<reference key="1">
    <citation type="journal article" date="2005" name="Proc. Natl. Acad. Sci. U.S.A.">
        <title>Comparison of the complete genome sequences of Pseudomonas syringae pv. syringae B728a and pv. tomato DC3000.</title>
        <authorList>
            <person name="Feil H."/>
            <person name="Feil W.S."/>
            <person name="Chain P."/>
            <person name="Larimer F."/>
            <person name="Dibartolo G."/>
            <person name="Copeland A."/>
            <person name="Lykidis A."/>
            <person name="Trong S."/>
            <person name="Nolan M."/>
            <person name="Goltsman E."/>
            <person name="Thiel J."/>
            <person name="Malfatti S."/>
            <person name="Loper J.E."/>
            <person name="Lapidus A."/>
            <person name="Detter J.C."/>
            <person name="Land M."/>
            <person name="Richardson P.M."/>
            <person name="Kyrpides N.C."/>
            <person name="Ivanova N."/>
            <person name="Lindow S.E."/>
        </authorList>
    </citation>
    <scope>NUCLEOTIDE SEQUENCE [LARGE SCALE GENOMIC DNA]</scope>
    <source>
        <strain>B728a</strain>
    </source>
</reference>
<sequence>MTQQSPAFIGPAWLEREQLIDAPDPVMLDWLFNQDSLTRRLDRLSDGRFSVFPQFEGWQPLRPDECLALGLPEAGEGWVREVYLRGNGNNWVFARSVAARSALQDGGLDMDELGTRSLGELLFSDPAFVRGTLEVCHYPEAWLPAADAARGLWARRSRFDRDALSVLVAEVFLPALCTAIHDKDHV</sequence>
<accession>Q4ZLB5</accession>
<protein>
    <recommendedName>
        <fullName evidence="1">Probable chorismate pyruvate-lyase</fullName>
        <shortName evidence="1">CL</shortName>
        <shortName evidence="1">CPL</shortName>
        <ecNumber evidence="1">4.1.3.40</ecNumber>
    </recommendedName>
</protein>
<feature type="chain" id="PRO_0000240562" description="Probable chorismate pyruvate-lyase">
    <location>
        <begin position="1"/>
        <end position="186"/>
    </location>
</feature>
<feature type="binding site" evidence="1">
    <location>
        <position position="80"/>
    </location>
    <ligand>
        <name>substrate</name>
    </ligand>
</feature>
<feature type="binding site" evidence="1">
    <location>
        <position position="118"/>
    </location>
    <ligand>
        <name>substrate</name>
    </ligand>
</feature>
<feature type="binding site" evidence="1">
    <location>
        <position position="170"/>
    </location>
    <ligand>
        <name>substrate</name>
    </ligand>
</feature>
<evidence type="ECO:0000255" key="1">
    <source>
        <dbReference type="HAMAP-Rule" id="MF_01632"/>
    </source>
</evidence>
<proteinExistence type="inferred from homology"/>
<organism>
    <name type="scientific">Pseudomonas syringae pv. syringae (strain B728a)</name>
    <dbReference type="NCBI Taxonomy" id="205918"/>
    <lineage>
        <taxon>Bacteria</taxon>
        <taxon>Pseudomonadati</taxon>
        <taxon>Pseudomonadota</taxon>
        <taxon>Gammaproteobacteria</taxon>
        <taxon>Pseudomonadales</taxon>
        <taxon>Pseudomonadaceae</taxon>
        <taxon>Pseudomonas</taxon>
        <taxon>Pseudomonas syringae</taxon>
    </lineage>
</organism>
<comment type="function">
    <text evidence="1">Removes the pyruvyl group from chorismate, with concomitant aromatization of the ring, to provide 4-hydroxybenzoate (4HB) for the ubiquinone pathway.</text>
</comment>
<comment type="catalytic activity">
    <reaction evidence="1">
        <text>chorismate = 4-hydroxybenzoate + pyruvate</text>
        <dbReference type="Rhea" id="RHEA:16505"/>
        <dbReference type="ChEBI" id="CHEBI:15361"/>
        <dbReference type="ChEBI" id="CHEBI:17879"/>
        <dbReference type="ChEBI" id="CHEBI:29748"/>
        <dbReference type="EC" id="4.1.3.40"/>
    </reaction>
</comment>
<comment type="pathway">
    <text evidence="1">Cofactor biosynthesis; ubiquinone biosynthesis.</text>
</comment>
<comment type="subcellular location">
    <subcellularLocation>
        <location evidence="1">Cytoplasm</location>
    </subcellularLocation>
</comment>
<comment type="similarity">
    <text evidence="1">Belongs to the UbiC family.</text>
</comment>
<name>UBIC_PSEU2</name>
<keyword id="KW-0963">Cytoplasm</keyword>
<keyword id="KW-0456">Lyase</keyword>
<keyword id="KW-0670">Pyruvate</keyword>
<keyword id="KW-0831">Ubiquinone biosynthesis</keyword>
<dbReference type="EC" id="4.1.3.40" evidence="1"/>
<dbReference type="EMBL" id="CP000075">
    <property type="protein sequence ID" value="AAY40057.1"/>
    <property type="molecule type" value="Genomic_DNA"/>
</dbReference>
<dbReference type="RefSeq" id="WP_011269385.1">
    <property type="nucleotide sequence ID" value="NC_007005.1"/>
</dbReference>
<dbReference type="RefSeq" id="YP_238095.1">
    <property type="nucleotide sequence ID" value="NC_007005.1"/>
</dbReference>
<dbReference type="SMR" id="Q4ZLB5"/>
<dbReference type="STRING" id="205918.Psyr_5030"/>
<dbReference type="KEGG" id="psb:Psyr_5030"/>
<dbReference type="PATRIC" id="fig|205918.7.peg.5189"/>
<dbReference type="eggNOG" id="COG3161">
    <property type="taxonomic scope" value="Bacteria"/>
</dbReference>
<dbReference type="HOGENOM" id="CLU_096824_3_0_6"/>
<dbReference type="OrthoDB" id="9789493at2"/>
<dbReference type="UniPathway" id="UPA00232"/>
<dbReference type="Proteomes" id="UP000000426">
    <property type="component" value="Chromosome"/>
</dbReference>
<dbReference type="GO" id="GO:0005829">
    <property type="term" value="C:cytosol"/>
    <property type="evidence" value="ECO:0007669"/>
    <property type="project" value="TreeGrafter"/>
</dbReference>
<dbReference type="GO" id="GO:0008813">
    <property type="term" value="F:chorismate lyase activity"/>
    <property type="evidence" value="ECO:0007669"/>
    <property type="project" value="UniProtKB-UniRule"/>
</dbReference>
<dbReference type="GO" id="GO:0042866">
    <property type="term" value="P:pyruvate biosynthetic process"/>
    <property type="evidence" value="ECO:0007669"/>
    <property type="project" value="UniProtKB-UniRule"/>
</dbReference>
<dbReference type="GO" id="GO:0006744">
    <property type="term" value="P:ubiquinone biosynthetic process"/>
    <property type="evidence" value="ECO:0007669"/>
    <property type="project" value="UniProtKB-UniRule"/>
</dbReference>
<dbReference type="Gene3D" id="3.40.1410.10">
    <property type="entry name" value="Chorismate lyase-like"/>
    <property type="match status" value="1"/>
</dbReference>
<dbReference type="HAMAP" id="MF_01632">
    <property type="entry name" value="UbiC"/>
    <property type="match status" value="1"/>
</dbReference>
<dbReference type="InterPro" id="IPR007440">
    <property type="entry name" value="Chorismate--pyruvate_lyase"/>
</dbReference>
<dbReference type="InterPro" id="IPR028978">
    <property type="entry name" value="Chorismate_lyase_/UTRA_dom_sf"/>
</dbReference>
<dbReference type="PANTHER" id="PTHR38683">
    <property type="entry name" value="CHORISMATE PYRUVATE-LYASE"/>
    <property type="match status" value="1"/>
</dbReference>
<dbReference type="PANTHER" id="PTHR38683:SF1">
    <property type="entry name" value="CHORISMATE PYRUVATE-LYASE"/>
    <property type="match status" value="1"/>
</dbReference>
<dbReference type="Pfam" id="PF04345">
    <property type="entry name" value="Chor_lyase"/>
    <property type="match status" value="1"/>
</dbReference>
<dbReference type="SUPFAM" id="SSF64288">
    <property type="entry name" value="Chorismate lyase-like"/>
    <property type="match status" value="1"/>
</dbReference>
<gene>
    <name evidence="1" type="primary">ubiC</name>
    <name type="ordered locus">Psyr_5030</name>
</gene>